<organism>
    <name type="scientific">Arabidopsis thaliana</name>
    <name type="common">Mouse-ear cress</name>
    <dbReference type="NCBI Taxonomy" id="3702"/>
    <lineage>
        <taxon>Eukaryota</taxon>
        <taxon>Viridiplantae</taxon>
        <taxon>Streptophyta</taxon>
        <taxon>Embryophyta</taxon>
        <taxon>Tracheophyta</taxon>
        <taxon>Spermatophyta</taxon>
        <taxon>Magnoliopsida</taxon>
        <taxon>eudicotyledons</taxon>
        <taxon>Gunneridae</taxon>
        <taxon>Pentapetalae</taxon>
        <taxon>rosids</taxon>
        <taxon>malvids</taxon>
        <taxon>Brassicales</taxon>
        <taxon>Brassicaceae</taxon>
        <taxon>Camelineae</taxon>
        <taxon>Arabidopsis</taxon>
    </lineage>
</organism>
<comment type="function">
    <text evidence="1">Ubiquitin-like protein which can be covalently attached to target lysines as a monomer. Does not seem to be involved in protein degradation and may function as an antagonist of ubiquitin in the degradation process (By similarity).</text>
</comment>
<comment type="subunit">
    <text evidence="1">Interacts with SAE2, SCE1, SIZ1 and MMS21 Covalently attached to a number of proteins.</text>
</comment>
<comment type="subcellular location">
    <subcellularLocation>
        <location evidence="1">Nucleus</location>
    </subcellularLocation>
    <subcellularLocation>
        <location evidence="1">Cytoplasm</location>
    </subcellularLocation>
</comment>
<comment type="miscellaneous">
    <text>Stress conditions rapidly and substantially elevates the amount of SUMO1 and SUMO2 conjugates with a concomitant reduction in the amount of free SUMO proteins. The SUMO conjugation system plays an important function in stress protection and/or repair.</text>
</comment>
<comment type="similarity">
    <text evidence="4">Belongs to the ubiquitin family. SUMO subfamily.</text>
</comment>
<sequence length="114" mass="13409">MSTTSRVGSNEVKMEGQKRKVVSDPTHVTLKVKGQDEEDFRVFWVRRNAKLLKMMELYTKMRGIEWNTFRFLFDGSRIREYHTPDELERKDGDEIDAMLCQQSGFGPSSIKFRV</sequence>
<dbReference type="EMBL" id="AB012242">
    <property type="protein sequence ID" value="BAB09424.1"/>
    <property type="molecule type" value="Genomic_DNA"/>
</dbReference>
<dbReference type="EMBL" id="CP002688">
    <property type="protein sequence ID" value="AED95714.1"/>
    <property type="molecule type" value="Genomic_DNA"/>
</dbReference>
<dbReference type="EMBL" id="CP002688">
    <property type="protein sequence ID" value="ANM70103.1"/>
    <property type="molecule type" value="Genomic_DNA"/>
</dbReference>
<dbReference type="EMBL" id="CP002688">
    <property type="protein sequence ID" value="ANM70104.1"/>
    <property type="molecule type" value="Genomic_DNA"/>
</dbReference>
<dbReference type="RefSeq" id="NP_001318763.1">
    <property type="nucleotide sequence ID" value="NM_001344800.1"/>
</dbReference>
<dbReference type="RefSeq" id="NP_001331738.1">
    <property type="nucleotide sequence ID" value="NM_001344801.1"/>
</dbReference>
<dbReference type="RefSeq" id="NP_199682.1">
    <property type="nucleotide sequence ID" value="NM_124248.2"/>
</dbReference>
<dbReference type="SMR" id="Q9FKC5"/>
<dbReference type="STRING" id="3702.Q9FKC5"/>
<dbReference type="iPTMnet" id="Q9FKC5"/>
<dbReference type="PaxDb" id="3702-AT5G48710.1"/>
<dbReference type="EnsemblPlants" id="AT5G48710.1">
    <property type="protein sequence ID" value="AT5G48710.1"/>
    <property type="gene ID" value="AT5G48710"/>
</dbReference>
<dbReference type="EnsemblPlants" id="AT5G48710.2">
    <property type="protein sequence ID" value="AT5G48710.2"/>
    <property type="gene ID" value="AT5G48710"/>
</dbReference>
<dbReference type="EnsemblPlants" id="AT5G48710.3">
    <property type="protein sequence ID" value="AT5G48710.3"/>
    <property type="gene ID" value="AT5G48710"/>
</dbReference>
<dbReference type="GeneID" id="834929"/>
<dbReference type="Gramene" id="AT5G48710.1">
    <property type="protein sequence ID" value="AT5G48710.1"/>
    <property type="gene ID" value="AT5G48710"/>
</dbReference>
<dbReference type="Gramene" id="AT5G48710.2">
    <property type="protein sequence ID" value="AT5G48710.2"/>
    <property type="gene ID" value="AT5G48710"/>
</dbReference>
<dbReference type="Gramene" id="AT5G48710.3">
    <property type="protein sequence ID" value="AT5G48710.3"/>
    <property type="gene ID" value="AT5G48710"/>
</dbReference>
<dbReference type="KEGG" id="ath:AT5G48710"/>
<dbReference type="Araport" id="AT5G48710"/>
<dbReference type="TAIR" id="AT5G48710">
    <property type="gene designation" value="SUMO6"/>
</dbReference>
<dbReference type="eggNOG" id="KOG1769">
    <property type="taxonomic scope" value="Eukaryota"/>
</dbReference>
<dbReference type="HOGENOM" id="CLU_148322_4_0_1"/>
<dbReference type="InParanoid" id="Q9FKC5"/>
<dbReference type="OMA" id="IREYHTL"/>
<dbReference type="PhylomeDB" id="Q9FKC5"/>
<dbReference type="PRO" id="PR:Q9FKC5"/>
<dbReference type="Proteomes" id="UP000006548">
    <property type="component" value="Chromosome 5"/>
</dbReference>
<dbReference type="ExpressionAtlas" id="Q9FKC5">
    <property type="expression patterns" value="baseline and differential"/>
</dbReference>
<dbReference type="GO" id="GO:0005737">
    <property type="term" value="C:cytoplasm"/>
    <property type="evidence" value="ECO:0007669"/>
    <property type="project" value="UniProtKB-SubCell"/>
</dbReference>
<dbReference type="GO" id="GO:0005634">
    <property type="term" value="C:nucleus"/>
    <property type="evidence" value="ECO:0007669"/>
    <property type="project" value="UniProtKB-SubCell"/>
</dbReference>
<dbReference type="CDD" id="cd01763">
    <property type="entry name" value="Ubl_SUMO_like"/>
    <property type="match status" value="1"/>
</dbReference>
<dbReference type="Gene3D" id="3.10.20.90">
    <property type="entry name" value="Phosphatidylinositol 3-kinase Catalytic Subunit, Chain A, domain 1"/>
    <property type="match status" value="1"/>
</dbReference>
<dbReference type="InterPro" id="IPR022617">
    <property type="entry name" value="Rad60/SUMO-like_dom"/>
</dbReference>
<dbReference type="InterPro" id="IPR000626">
    <property type="entry name" value="Ubiquitin-like_dom"/>
</dbReference>
<dbReference type="InterPro" id="IPR029071">
    <property type="entry name" value="Ubiquitin-like_domsf"/>
</dbReference>
<dbReference type="PANTHER" id="PTHR10562">
    <property type="entry name" value="SMALL UBIQUITIN-RELATED MODIFIER"/>
    <property type="match status" value="1"/>
</dbReference>
<dbReference type="Pfam" id="PF11976">
    <property type="entry name" value="Rad60-SLD"/>
    <property type="match status" value="1"/>
</dbReference>
<dbReference type="SUPFAM" id="SSF54236">
    <property type="entry name" value="Ubiquitin-like"/>
    <property type="match status" value="1"/>
</dbReference>
<dbReference type="PROSITE" id="PS50053">
    <property type="entry name" value="UBIQUITIN_2"/>
    <property type="match status" value="1"/>
</dbReference>
<name>SUMO4_ARATH</name>
<feature type="chain" id="PRO_0000397035" description="Putative small ubiquitin-related modifier 4">
    <location>
        <begin position="1"/>
        <end position="114"/>
    </location>
</feature>
<feature type="domain" description="Ubiquitin-like" evidence="2">
    <location>
        <begin position="26"/>
        <end position="104"/>
    </location>
</feature>
<feature type="region of interest" description="Disordered" evidence="3">
    <location>
        <begin position="1"/>
        <end position="20"/>
    </location>
</feature>
<feature type="cross-link" description="Glycyl lysine isopeptide (Gly-Lys) (interchain with K-? in acceptor proteins)">
    <location>
        <position position="104"/>
    </location>
</feature>
<accession>Q9FKC5</accession>
<keyword id="KW-0963">Cytoplasm</keyword>
<keyword id="KW-1017">Isopeptide bond</keyword>
<keyword id="KW-0539">Nucleus</keyword>
<keyword id="KW-1185">Reference proteome</keyword>
<keyword id="KW-0833">Ubl conjugation pathway</keyword>
<proteinExistence type="evidence at protein level"/>
<gene>
    <name type="primary">SUMO4</name>
    <name type="synonym">SUM4</name>
    <name type="ordered locus">At5g48710</name>
    <name type="ORF">K24G6.4</name>
</gene>
<evidence type="ECO:0000250" key="1"/>
<evidence type="ECO:0000255" key="2">
    <source>
        <dbReference type="PROSITE-ProRule" id="PRU00214"/>
    </source>
</evidence>
<evidence type="ECO:0000256" key="3">
    <source>
        <dbReference type="SAM" id="MobiDB-lite"/>
    </source>
</evidence>
<evidence type="ECO:0000305" key="4"/>
<reference key="1">
    <citation type="journal article" date="1998" name="DNA Res.">
        <title>Structural analysis of Arabidopsis thaliana chromosome 5. VI. Sequence features of the regions of 1,367,185 bp covered by 19 physically assigned P1 and TAC clones.</title>
        <authorList>
            <person name="Kotani H."/>
            <person name="Nakamura Y."/>
            <person name="Sato S."/>
            <person name="Asamizu E."/>
            <person name="Kaneko T."/>
            <person name="Miyajima N."/>
            <person name="Tabata S."/>
        </authorList>
    </citation>
    <scope>NUCLEOTIDE SEQUENCE [LARGE SCALE GENOMIC DNA]</scope>
    <source>
        <strain>cv. Columbia</strain>
    </source>
</reference>
<reference key="2">
    <citation type="journal article" date="2017" name="Plant J.">
        <title>Araport11: a complete reannotation of the Arabidopsis thaliana reference genome.</title>
        <authorList>
            <person name="Cheng C.Y."/>
            <person name="Krishnakumar V."/>
            <person name="Chan A.P."/>
            <person name="Thibaud-Nissen F."/>
            <person name="Schobel S."/>
            <person name="Town C.D."/>
        </authorList>
    </citation>
    <scope>GENOME REANNOTATION</scope>
    <source>
        <strain>cv. Columbia</strain>
    </source>
</reference>
<protein>
    <recommendedName>
        <fullName>Putative small ubiquitin-related modifier 4</fullName>
        <shortName>AtSUMO4</shortName>
    </recommendedName>
</protein>